<sequence length="354" mass="37335">MLRMRTRSASWMELPRRVVAGAGALANIGDVCVDLRLSGRALVITGPQTRSVAGDNLAASLTDCGFEADVVITRDPRPAEVDRVKSFALDYKADFLIGAGGGRSIDIAKLAAYHLDIPYLSVPTAASHDGIASAMASLNMDGETKSIPTRAPLAIIADTGIISKAPPRLMSAGCGDIISNYTAILDWRLAKRLKCEDYSEYAAALSSMTAKMVVDMAPSIKPGHEPSAKVVVQALISSGVAMSIAGSSRPASGSEHMFAHALNRIAPGRGLHGELCGIGTIIMMYLHGGDWRMIREALKVLGAPASAHELNIPEDVVVEALTQAHKIRPERYTILGNGLTEAAARAAAETTKVI</sequence>
<keyword id="KW-0963">Cytoplasm</keyword>
<keyword id="KW-0444">Lipid biosynthesis</keyword>
<keyword id="KW-0443">Lipid metabolism</keyword>
<keyword id="KW-0479">Metal-binding</keyword>
<keyword id="KW-0520">NAD</keyword>
<keyword id="KW-0521">NADP</keyword>
<keyword id="KW-0560">Oxidoreductase</keyword>
<keyword id="KW-0594">Phospholipid biosynthesis</keyword>
<keyword id="KW-1208">Phospholipid metabolism</keyword>
<keyword id="KW-1185">Reference proteome</keyword>
<keyword id="KW-0862">Zinc</keyword>
<feature type="chain" id="PRO_0000350658" description="Glycerol-1-phosphate dehydrogenase [NAD(P)+]">
    <location>
        <begin position="1"/>
        <end position="354"/>
    </location>
</feature>
<feature type="binding site" evidence="1">
    <location>
        <begin position="102"/>
        <end position="106"/>
    </location>
    <ligand>
        <name>NAD(+)</name>
        <dbReference type="ChEBI" id="CHEBI:57540"/>
    </ligand>
</feature>
<feature type="binding site" evidence="1">
    <location>
        <begin position="124"/>
        <end position="127"/>
    </location>
    <ligand>
        <name>NAD(+)</name>
        <dbReference type="ChEBI" id="CHEBI:57540"/>
    </ligand>
</feature>
<feature type="binding site" evidence="1">
    <location>
        <position position="129"/>
    </location>
    <ligand>
        <name>substrate</name>
    </ligand>
</feature>
<feature type="binding site" evidence="1">
    <location>
        <position position="133"/>
    </location>
    <ligand>
        <name>NAD(+)</name>
        <dbReference type="ChEBI" id="CHEBI:57540"/>
    </ligand>
</feature>
<feature type="binding site" evidence="1">
    <location>
        <position position="176"/>
    </location>
    <ligand>
        <name>substrate</name>
    </ligand>
</feature>
<feature type="binding site" evidence="1">
    <location>
        <position position="176"/>
    </location>
    <ligand>
        <name>Zn(2+)</name>
        <dbReference type="ChEBI" id="CHEBI:29105"/>
        <note>catalytic</note>
    </ligand>
</feature>
<feature type="binding site" evidence="1">
    <location>
        <position position="256"/>
    </location>
    <ligand>
        <name>Zn(2+)</name>
        <dbReference type="ChEBI" id="CHEBI:29105"/>
        <note>catalytic</note>
    </ligand>
</feature>
<feature type="binding site" evidence="1">
    <location>
        <position position="260"/>
    </location>
    <ligand>
        <name>substrate</name>
    </ligand>
</feature>
<feature type="binding site" evidence="1">
    <location>
        <position position="272"/>
    </location>
    <ligand>
        <name>Zn(2+)</name>
        <dbReference type="ChEBI" id="CHEBI:29105"/>
        <note>catalytic</note>
    </ligand>
</feature>
<proteinExistence type="inferred from homology"/>
<reference key="1">
    <citation type="submission" date="2006-10" db="EMBL/GenBank/DDBJ databases">
        <title>Complete sequence of Methanosaeta thermophila PT.</title>
        <authorList>
            <consortium name="US DOE Joint Genome Institute"/>
            <person name="Copeland A."/>
            <person name="Lucas S."/>
            <person name="Lapidus A."/>
            <person name="Barry K."/>
            <person name="Detter J.C."/>
            <person name="Glavina del Rio T."/>
            <person name="Hammon N."/>
            <person name="Israni S."/>
            <person name="Pitluck S."/>
            <person name="Chain P."/>
            <person name="Malfatti S."/>
            <person name="Shin M."/>
            <person name="Vergez L."/>
            <person name="Schmutz J."/>
            <person name="Larimer F."/>
            <person name="Land M."/>
            <person name="Hauser L."/>
            <person name="Kyrpides N."/>
            <person name="Kim E."/>
            <person name="Smith K.S."/>
            <person name="Ingram-Smith C."/>
            <person name="Richardson P."/>
        </authorList>
    </citation>
    <scope>NUCLEOTIDE SEQUENCE [LARGE SCALE GENOMIC DNA]</scope>
    <source>
        <strain>DSM 6194 / JCM 14653 / NBRC 101360 / PT</strain>
    </source>
</reference>
<name>G1PDH_METTP</name>
<accession>A0B5P3</accession>
<comment type="function">
    <text evidence="1">Catalyzes the NAD(P)H-dependent reduction of dihydroxyacetonephosphate (DHAP or glycerone phosphate) to glycerol 1-phosphate (G1P). The G1P thus generated is used as the glycerophosphate backbone of phospholipids in the cellular membranes of Archaea.</text>
</comment>
<comment type="catalytic activity">
    <reaction evidence="1">
        <text>sn-glycerol 1-phosphate + NAD(+) = dihydroxyacetone phosphate + NADH + H(+)</text>
        <dbReference type="Rhea" id="RHEA:21412"/>
        <dbReference type="ChEBI" id="CHEBI:15378"/>
        <dbReference type="ChEBI" id="CHEBI:57540"/>
        <dbReference type="ChEBI" id="CHEBI:57642"/>
        <dbReference type="ChEBI" id="CHEBI:57685"/>
        <dbReference type="ChEBI" id="CHEBI:57945"/>
        <dbReference type="EC" id="1.1.1.261"/>
    </reaction>
</comment>
<comment type="catalytic activity">
    <reaction evidence="1">
        <text>sn-glycerol 1-phosphate + NADP(+) = dihydroxyacetone phosphate + NADPH + H(+)</text>
        <dbReference type="Rhea" id="RHEA:21416"/>
        <dbReference type="ChEBI" id="CHEBI:15378"/>
        <dbReference type="ChEBI" id="CHEBI:57642"/>
        <dbReference type="ChEBI" id="CHEBI:57685"/>
        <dbReference type="ChEBI" id="CHEBI:57783"/>
        <dbReference type="ChEBI" id="CHEBI:58349"/>
        <dbReference type="EC" id="1.1.1.261"/>
    </reaction>
</comment>
<comment type="cofactor">
    <cofactor evidence="1">
        <name>Zn(2+)</name>
        <dbReference type="ChEBI" id="CHEBI:29105"/>
    </cofactor>
    <text evidence="1">Binds 1 zinc ion per subunit.</text>
</comment>
<comment type="pathway">
    <text evidence="1">Membrane lipid metabolism; glycerophospholipid metabolism.</text>
</comment>
<comment type="subcellular location">
    <subcellularLocation>
        <location evidence="1">Cytoplasm</location>
    </subcellularLocation>
</comment>
<comment type="similarity">
    <text evidence="1">Belongs to the glycerol-1-phosphate dehydrogenase family.</text>
</comment>
<dbReference type="EC" id="1.1.1.261" evidence="1"/>
<dbReference type="EMBL" id="CP000477">
    <property type="protein sequence ID" value="ABK14017.1"/>
    <property type="molecule type" value="Genomic_DNA"/>
</dbReference>
<dbReference type="RefSeq" id="WP_011695416.1">
    <property type="nucleotide sequence ID" value="NC_008553.1"/>
</dbReference>
<dbReference type="SMR" id="A0B5P3"/>
<dbReference type="STRING" id="349307.Mthe_0219"/>
<dbReference type="GeneID" id="4461992"/>
<dbReference type="KEGG" id="mtp:Mthe_0219"/>
<dbReference type="HOGENOM" id="CLU_038362_0_0_2"/>
<dbReference type="OrthoDB" id="8656at2157"/>
<dbReference type="UniPathway" id="UPA00940"/>
<dbReference type="Proteomes" id="UP000000674">
    <property type="component" value="Chromosome"/>
</dbReference>
<dbReference type="GO" id="GO:0005737">
    <property type="term" value="C:cytoplasm"/>
    <property type="evidence" value="ECO:0007669"/>
    <property type="project" value="UniProtKB-SubCell"/>
</dbReference>
<dbReference type="GO" id="GO:0106357">
    <property type="term" value="F:glycerol-1-phosphate dehydrogenase (NAD+) activity"/>
    <property type="evidence" value="ECO:0007669"/>
    <property type="project" value="RHEA"/>
</dbReference>
<dbReference type="GO" id="GO:0106358">
    <property type="term" value="F:glycerol-1-phosphate dehydrogenase (NADP+) activity"/>
    <property type="evidence" value="ECO:0007669"/>
    <property type="project" value="RHEA"/>
</dbReference>
<dbReference type="GO" id="GO:0046872">
    <property type="term" value="F:metal ion binding"/>
    <property type="evidence" value="ECO:0007669"/>
    <property type="project" value="UniProtKB-KW"/>
</dbReference>
<dbReference type="GO" id="GO:0006650">
    <property type="term" value="P:glycerophospholipid metabolic process"/>
    <property type="evidence" value="ECO:0007669"/>
    <property type="project" value="UniProtKB-UniRule"/>
</dbReference>
<dbReference type="GO" id="GO:0008654">
    <property type="term" value="P:phospholipid biosynthetic process"/>
    <property type="evidence" value="ECO:0007669"/>
    <property type="project" value="UniProtKB-KW"/>
</dbReference>
<dbReference type="CDD" id="cd08173">
    <property type="entry name" value="Gro1PDH"/>
    <property type="match status" value="1"/>
</dbReference>
<dbReference type="Gene3D" id="3.40.50.1970">
    <property type="match status" value="1"/>
</dbReference>
<dbReference type="Gene3D" id="1.20.1090.10">
    <property type="entry name" value="Dehydroquinate synthase-like - alpha domain"/>
    <property type="match status" value="1"/>
</dbReference>
<dbReference type="HAMAP" id="MF_00497_A">
    <property type="entry name" value="G1P_dehydrogenase_A"/>
    <property type="match status" value="1"/>
</dbReference>
<dbReference type="InterPro" id="IPR023002">
    <property type="entry name" value="G1P_dehydrogenase_arc"/>
</dbReference>
<dbReference type="InterPro" id="IPR032837">
    <property type="entry name" value="G1PDH"/>
</dbReference>
<dbReference type="InterPro" id="IPR016205">
    <property type="entry name" value="Glycerol_DH"/>
</dbReference>
<dbReference type="NCBIfam" id="NF002022">
    <property type="entry name" value="PRK00843.1"/>
    <property type="match status" value="1"/>
</dbReference>
<dbReference type="PANTHER" id="PTHR43616">
    <property type="entry name" value="GLYCEROL DEHYDROGENASE"/>
    <property type="match status" value="1"/>
</dbReference>
<dbReference type="PANTHER" id="PTHR43616:SF5">
    <property type="entry name" value="GLYCEROL DEHYDROGENASE 1"/>
    <property type="match status" value="1"/>
</dbReference>
<dbReference type="Pfam" id="PF13685">
    <property type="entry name" value="Fe-ADH_2"/>
    <property type="match status" value="1"/>
</dbReference>
<dbReference type="PIRSF" id="PIRSF000112">
    <property type="entry name" value="Glycerol_dehydrogenase"/>
    <property type="match status" value="1"/>
</dbReference>
<dbReference type="SUPFAM" id="SSF56796">
    <property type="entry name" value="Dehydroquinate synthase-like"/>
    <property type="match status" value="1"/>
</dbReference>
<organism>
    <name type="scientific">Methanothrix thermoacetophila (strain DSM 6194 / JCM 14653 / NBRC 101360 / PT)</name>
    <name type="common">Methanosaeta thermophila</name>
    <dbReference type="NCBI Taxonomy" id="349307"/>
    <lineage>
        <taxon>Archaea</taxon>
        <taxon>Methanobacteriati</taxon>
        <taxon>Methanobacteriota</taxon>
        <taxon>Stenosarchaea group</taxon>
        <taxon>Methanomicrobia</taxon>
        <taxon>Methanotrichales</taxon>
        <taxon>Methanotrichaceae</taxon>
        <taxon>Methanothrix</taxon>
    </lineage>
</organism>
<gene>
    <name evidence="1" type="primary">egsA</name>
    <name type="ordered locus">Mthe_0219</name>
</gene>
<protein>
    <recommendedName>
        <fullName evidence="1">Glycerol-1-phosphate dehydrogenase [NAD(P)+]</fullName>
        <shortName evidence="1">G1P dehydrogenase</shortName>
        <shortName evidence="1">G1PDH</shortName>
        <ecNumber evidence="1">1.1.1.261</ecNumber>
    </recommendedName>
    <alternativeName>
        <fullName evidence="1">Enantiomeric glycerophosphate synthase</fullName>
    </alternativeName>
    <alternativeName>
        <fullName evidence="1">sn-glycerol-1-phosphate dehydrogenase</fullName>
    </alternativeName>
</protein>
<evidence type="ECO:0000255" key="1">
    <source>
        <dbReference type="HAMAP-Rule" id="MF_00497"/>
    </source>
</evidence>